<comment type="function">
    <text>Part of the binding-protein-dependent transport system for hemin.</text>
</comment>
<comment type="similarity">
    <text evidence="1">To Y.enterocolitica HemS.</text>
</comment>
<reference key="1">
    <citation type="journal article" date="1996" name="Mol. Microbiol.">
        <title>The hmu locus of Yersinia pestis is essential for utilization of free haemin and haem-protein complexes as iron sources.</title>
        <authorList>
            <person name="Hornung J.M."/>
            <person name="Jones H.A."/>
            <person name="Perry R.D."/>
        </authorList>
    </citation>
    <scope>NUCLEOTIDE SEQUENCE [GENOMIC DNA]</scope>
    <source>
        <strain>KIM6</strain>
    </source>
</reference>
<reference key="2">
    <citation type="journal article" date="2001" name="Nature">
        <title>Genome sequence of Yersinia pestis, the causative agent of plague.</title>
        <authorList>
            <person name="Parkhill J."/>
            <person name="Wren B.W."/>
            <person name="Thomson N.R."/>
            <person name="Titball R.W."/>
            <person name="Holden M.T.G."/>
            <person name="Prentice M.B."/>
            <person name="Sebaihia M."/>
            <person name="James K.D."/>
            <person name="Churcher C.M."/>
            <person name="Mungall K.L."/>
            <person name="Baker S."/>
            <person name="Basham D."/>
            <person name="Bentley S.D."/>
            <person name="Brooks K."/>
            <person name="Cerdeno-Tarraga A.-M."/>
            <person name="Chillingworth T."/>
            <person name="Cronin A."/>
            <person name="Davies R.M."/>
            <person name="Davis P."/>
            <person name="Dougan G."/>
            <person name="Feltwell T."/>
            <person name="Hamlin N."/>
            <person name="Holroyd S."/>
            <person name="Jagels K."/>
            <person name="Karlyshev A.V."/>
            <person name="Leather S."/>
            <person name="Moule S."/>
            <person name="Oyston P.C.F."/>
            <person name="Quail M.A."/>
            <person name="Rutherford K.M."/>
            <person name="Simmonds M."/>
            <person name="Skelton J."/>
            <person name="Stevens K."/>
            <person name="Whitehead S."/>
            <person name="Barrell B.G."/>
        </authorList>
    </citation>
    <scope>NUCLEOTIDE SEQUENCE [LARGE SCALE GENOMIC DNA]</scope>
    <source>
        <strain>CO-92 / Biovar Orientalis</strain>
    </source>
</reference>
<reference key="3">
    <citation type="journal article" date="2002" name="J. Bacteriol.">
        <title>Genome sequence of Yersinia pestis KIM.</title>
        <authorList>
            <person name="Deng W."/>
            <person name="Burland V."/>
            <person name="Plunkett G. III"/>
            <person name="Boutin A."/>
            <person name="Mayhew G.F."/>
            <person name="Liss P."/>
            <person name="Perna N.T."/>
            <person name="Rose D.J."/>
            <person name="Mau B."/>
            <person name="Zhou S."/>
            <person name="Schwartz D.C."/>
            <person name="Fetherston J.D."/>
            <person name="Lindler L.E."/>
            <person name="Brubaker R.R."/>
            <person name="Plano G.V."/>
            <person name="Straley S.C."/>
            <person name="McDonough K.A."/>
            <person name="Nilles M.L."/>
            <person name="Matson J.S."/>
            <person name="Blattner F.R."/>
            <person name="Perry R.D."/>
        </authorList>
    </citation>
    <scope>NUCLEOTIDE SEQUENCE [LARGE SCALE GENOMIC DNA]</scope>
    <source>
        <strain>KIM10+ / Biovar Mediaevalis</strain>
    </source>
</reference>
<reference key="4">
    <citation type="journal article" date="2004" name="DNA Res.">
        <title>Complete genome sequence of Yersinia pestis strain 91001, an isolate avirulent to humans.</title>
        <authorList>
            <person name="Song Y."/>
            <person name="Tong Z."/>
            <person name="Wang J."/>
            <person name="Wang L."/>
            <person name="Guo Z."/>
            <person name="Han Y."/>
            <person name="Zhang J."/>
            <person name="Pei D."/>
            <person name="Zhou D."/>
            <person name="Qin H."/>
            <person name="Pang X."/>
            <person name="Han Y."/>
            <person name="Zhai J."/>
            <person name="Li M."/>
            <person name="Cui B."/>
            <person name="Qi Z."/>
            <person name="Jin L."/>
            <person name="Dai R."/>
            <person name="Chen F."/>
            <person name="Li S."/>
            <person name="Ye C."/>
            <person name="Du Z."/>
            <person name="Lin W."/>
            <person name="Wang J."/>
            <person name="Yu J."/>
            <person name="Yang H."/>
            <person name="Wang J."/>
            <person name="Huang P."/>
            <person name="Yang R."/>
        </authorList>
    </citation>
    <scope>NUCLEOTIDE SEQUENCE [LARGE SCALE GENOMIC DNA]</scope>
    <source>
        <strain>91001 / Biovar Mediaevalis</strain>
    </source>
</reference>
<keyword id="KW-0406">Ion transport</keyword>
<keyword id="KW-0408">Iron</keyword>
<keyword id="KW-0410">Iron transport</keyword>
<keyword id="KW-1185">Reference proteome</keyword>
<keyword id="KW-0813">Transport</keyword>
<gene>
    <name type="primary">hmuS</name>
    <name type="ordered locus">YPO0282</name>
    <name type="ordered locus">y0542</name>
    <name type="ordered locus">YP_0437</name>
</gene>
<dbReference type="EMBL" id="U60647">
    <property type="protein sequence ID" value="AAC64867.1"/>
    <property type="molecule type" value="Genomic_DNA"/>
</dbReference>
<dbReference type="EMBL" id="AL590842">
    <property type="protein sequence ID" value="CAL18968.1"/>
    <property type="molecule type" value="Genomic_DNA"/>
</dbReference>
<dbReference type="EMBL" id="AE009952">
    <property type="protein sequence ID" value="AAM84130.1"/>
    <property type="molecule type" value="Genomic_DNA"/>
</dbReference>
<dbReference type="EMBL" id="AE017042">
    <property type="protein sequence ID" value="AAS60708.1"/>
    <property type="molecule type" value="Genomic_DNA"/>
</dbReference>
<dbReference type="PIR" id="AF0035">
    <property type="entry name" value="AF0035"/>
</dbReference>
<dbReference type="PIR" id="T12070">
    <property type="entry name" value="T12070"/>
</dbReference>
<dbReference type="RefSeq" id="WP_002209061.1">
    <property type="nucleotide sequence ID" value="NZ_WUCM01000046.1"/>
</dbReference>
<dbReference type="RefSeq" id="YP_002345364.1">
    <property type="nucleotide sequence ID" value="NC_003143.1"/>
</dbReference>
<dbReference type="SMR" id="Q56990"/>
<dbReference type="IntAct" id="Q56990">
    <property type="interactions" value="1"/>
</dbReference>
<dbReference type="STRING" id="214092.YPO0282"/>
<dbReference type="PaxDb" id="214092-YPO0282"/>
<dbReference type="EnsemblBacteria" id="AAS60708">
    <property type="protein sequence ID" value="AAS60708"/>
    <property type="gene ID" value="YP_0437"/>
</dbReference>
<dbReference type="KEGG" id="ype:YPO0282"/>
<dbReference type="KEGG" id="ypk:y0542"/>
<dbReference type="KEGG" id="ypm:YP_0437"/>
<dbReference type="PATRIC" id="fig|214092.21.peg.515"/>
<dbReference type="eggNOG" id="COG3720">
    <property type="taxonomic scope" value="Bacteria"/>
</dbReference>
<dbReference type="HOGENOM" id="CLU_034543_0_0_6"/>
<dbReference type="OMA" id="DTHEFFG"/>
<dbReference type="OrthoDB" id="316630at2"/>
<dbReference type="Proteomes" id="UP000000815">
    <property type="component" value="Chromosome"/>
</dbReference>
<dbReference type="Proteomes" id="UP000001019">
    <property type="component" value="Chromosome"/>
</dbReference>
<dbReference type="Proteomes" id="UP000002490">
    <property type="component" value="Chromosome"/>
</dbReference>
<dbReference type="GO" id="GO:0006826">
    <property type="term" value="P:iron ion transport"/>
    <property type="evidence" value="ECO:0007669"/>
    <property type="project" value="UniProtKB-KW"/>
</dbReference>
<dbReference type="CDD" id="cd16831">
    <property type="entry name" value="HemS-like_C"/>
    <property type="match status" value="1"/>
</dbReference>
<dbReference type="CDD" id="cd16830">
    <property type="entry name" value="HemS-like_N"/>
    <property type="match status" value="1"/>
</dbReference>
<dbReference type="Gene3D" id="3.40.1570.10">
    <property type="entry name" value="HemS/ChuS/ChuX like domains"/>
    <property type="match status" value="2"/>
</dbReference>
<dbReference type="InterPro" id="IPR053733">
    <property type="entry name" value="Heme_Transport_Util_sf"/>
</dbReference>
<dbReference type="InterPro" id="IPR007845">
    <property type="entry name" value="HemS/ChuX_dom"/>
</dbReference>
<dbReference type="Pfam" id="PF05171">
    <property type="entry name" value="HemS"/>
    <property type="match status" value="2"/>
</dbReference>
<dbReference type="SUPFAM" id="SSF144064">
    <property type="entry name" value="Heme iron utilization protein-like"/>
    <property type="match status" value="1"/>
</dbReference>
<accession>Q56990</accession>
<accession>Q0WK24</accession>
<evidence type="ECO:0000305" key="1"/>
<feature type="chain" id="PRO_0000084010" description="Hemin transport protein HmuS">
    <location>
        <begin position="1"/>
        <end position="345"/>
    </location>
</feature>
<sequence>MNASLYQQYVQAKAEHPGKYARDLATLMGISEAELTHSRVGHDAKRLQSDARALLAALESVGEVKAITRNTYAVHEQVGRYENQHLNGHAGLILNPRALDLRLFLNQWASAFTLTEETRHGVRHSIQFFDHQGDALHKVYVTEQTDMSAWEALLAQFIIPENPALQLEPLSTPEAVEPTADDATVDSEWRAMTDVHQFFQLLKRNNLTRQQAFRAVGDDLAYQVDNNSLTQLLHIAQQDQNEIMIFVGNRGCVQIFTGLIEKVTPHNEWINVFNQRFTLHLIETAIAESWITRKPTKDGFVTSLELFAADGTQLAQLYGQRTEGQPEQNQWREQIARLINKDIAA</sequence>
<proteinExistence type="predicted"/>
<organism>
    <name type="scientific">Yersinia pestis</name>
    <dbReference type="NCBI Taxonomy" id="632"/>
    <lineage>
        <taxon>Bacteria</taxon>
        <taxon>Pseudomonadati</taxon>
        <taxon>Pseudomonadota</taxon>
        <taxon>Gammaproteobacteria</taxon>
        <taxon>Enterobacterales</taxon>
        <taxon>Yersiniaceae</taxon>
        <taxon>Yersinia</taxon>
    </lineage>
</organism>
<protein>
    <recommendedName>
        <fullName>Hemin transport protein HmuS</fullName>
    </recommendedName>
</protein>
<name>HMUS_YERPE</name>